<feature type="chain" id="PRO_0000329801" description="Polyribonucleotide nucleotidyltransferase">
    <location>
        <begin position="1"/>
        <end position="715"/>
    </location>
</feature>
<feature type="domain" description="KH" evidence="1">
    <location>
        <begin position="555"/>
        <end position="614"/>
    </location>
</feature>
<feature type="domain" description="S1 motif" evidence="1">
    <location>
        <begin position="624"/>
        <end position="692"/>
    </location>
</feature>
<feature type="binding site" evidence="1">
    <location>
        <position position="488"/>
    </location>
    <ligand>
        <name>Mg(2+)</name>
        <dbReference type="ChEBI" id="CHEBI:18420"/>
    </ligand>
</feature>
<feature type="binding site" evidence="1">
    <location>
        <position position="494"/>
    </location>
    <ligand>
        <name>Mg(2+)</name>
        <dbReference type="ChEBI" id="CHEBI:18420"/>
    </ligand>
</feature>
<name>PNP_RHILO</name>
<comment type="function">
    <text evidence="1">Involved in mRNA degradation. Catalyzes the phosphorolysis of single-stranded polyribonucleotides processively in the 3'- to 5'-direction.</text>
</comment>
<comment type="catalytic activity">
    <reaction evidence="1">
        <text>RNA(n+1) + phosphate = RNA(n) + a ribonucleoside 5'-diphosphate</text>
        <dbReference type="Rhea" id="RHEA:22096"/>
        <dbReference type="Rhea" id="RHEA-COMP:14527"/>
        <dbReference type="Rhea" id="RHEA-COMP:17342"/>
        <dbReference type="ChEBI" id="CHEBI:43474"/>
        <dbReference type="ChEBI" id="CHEBI:57930"/>
        <dbReference type="ChEBI" id="CHEBI:140395"/>
        <dbReference type="EC" id="2.7.7.8"/>
    </reaction>
</comment>
<comment type="cofactor">
    <cofactor evidence="1">
        <name>Mg(2+)</name>
        <dbReference type="ChEBI" id="CHEBI:18420"/>
    </cofactor>
</comment>
<comment type="subcellular location">
    <subcellularLocation>
        <location evidence="1">Cytoplasm</location>
    </subcellularLocation>
</comment>
<comment type="similarity">
    <text evidence="1">Belongs to the polyribonucleotide nucleotidyltransferase family.</text>
</comment>
<reference key="1">
    <citation type="journal article" date="2000" name="DNA Res.">
        <title>Complete genome structure of the nitrogen-fixing symbiotic bacterium Mesorhizobium loti.</title>
        <authorList>
            <person name="Kaneko T."/>
            <person name="Nakamura Y."/>
            <person name="Sato S."/>
            <person name="Asamizu E."/>
            <person name="Kato T."/>
            <person name="Sasamoto S."/>
            <person name="Watanabe A."/>
            <person name="Idesawa K."/>
            <person name="Ishikawa A."/>
            <person name="Kawashima K."/>
            <person name="Kimura T."/>
            <person name="Kishida Y."/>
            <person name="Kiyokawa C."/>
            <person name="Kohara M."/>
            <person name="Matsumoto M."/>
            <person name="Matsuno A."/>
            <person name="Mochizuki Y."/>
            <person name="Nakayama S."/>
            <person name="Nakazaki N."/>
            <person name="Shimpo S."/>
            <person name="Sugimoto M."/>
            <person name="Takeuchi C."/>
            <person name="Yamada M."/>
            <person name="Tabata S."/>
        </authorList>
    </citation>
    <scope>NUCLEOTIDE SEQUENCE [LARGE SCALE GENOMIC DNA]</scope>
    <source>
        <strain>LMG 29417 / CECT 9101 / MAFF 303099</strain>
    </source>
</reference>
<accession>Q98BI3</accession>
<keyword id="KW-0963">Cytoplasm</keyword>
<keyword id="KW-0460">Magnesium</keyword>
<keyword id="KW-0479">Metal-binding</keyword>
<keyword id="KW-0548">Nucleotidyltransferase</keyword>
<keyword id="KW-0694">RNA-binding</keyword>
<keyword id="KW-0808">Transferase</keyword>
<dbReference type="EC" id="2.7.7.8" evidence="1"/>
<dbReference type="EMBL" id="BA000012">
    <property type="protein sequence ID" value="BAB51989.1"/>
    <property type="molecule type" value="Genomic_DNA"/>
</dbReference>
<dbReference type="RefSeq" id="WP_010913327.1">
    <property type="nucleotide sequence ID" value="NC_002678.2"/>
</dbReference>
<dbReference type="SMR" id="Q98BI3"/>
<dbReference type="KEGG" id="mlo:mlr5562"/>
<dbReference type="PATRIC" id="fig|266835.9.peg.4421"/>
<dbReference type="eggNOG" id="COG1185">
    <property type="taxonomic scope" value="Bacteria"/>
</dbReference>
<dbReference type="HOGENOM" id="CLU_004217_2_2_5"/>
<dbReference type="Proteomes" id="UP000000552">
    <property type="component" value="Chromosome"/>
</dbReference>
<dbReference type="GO" id="GO:0005829">
    <property type="term" value="C:cytosol"/>
    <property type="evidence" value="ECO:0007669"/>
    <property type="project" value="TreeGrafter"/>
</dbReference>
<dbReference type="GO" id="GO:0000175">
    <property type="term" value="F:3'-5'-RNA exonuclease activity"/>
    <property type="evidence" value="ECO:0007669"/>
    <property type="project" value="TreeGrafter"/>
</dbReference>
<dbReference type="GO" id="GO:0000287">
    <property type="term" value="F:magnesium ion binding"/>
    <property type="evidence" value="ECO:0007669"/>
    <property type="project" value="UniProtKB-UniRule"/>
</dbReference>
<dbReference type="GO" id="GO:0004654">
    <property type="term" value="F:polyribonucleotide nucleotidyltransferase activity"/>
    <property type="evidence" value="ECO:0007669"/>
    <property type="project" value="UniProtKB-UniRule"/>
</dbReference>
<dbReference type="GO" id="GO:0003723">
    <property type="term" value="F:RNA binding"/>
    <property type="evidence" value="ECO:0007669"/>
    <property type="project" value="UniProtKB-UniRule"/>
</dbReference>
<dbReference type="GO" id="GO:0006402">
    <property type="term" value="P:mRNA catabolic process"/>
    <property type="evidence" value="ECO:0007669"/>
    <property type="project" value="UniProtKB-UniRule"/>
</dbReference>
<dbReference type="GO" id="GO:0006396">
    <property type="term" value="P:RNA processing"/>
    <property type="evidence" value="ECO:0007669"/>
    <property type="project" value="InterPro"/>
</dbReference>
<dbReference type="CDD" id="cd02393">
    <property type="entry name" value="KH-I_PNPase"/>
    <property type="match status" value="1"/>
</dbReference>
<dbReference type="CDD" id="cd11363">
    <property type="entry name" value="RNase_PH_PNPase_1"/>
    <property type="match status" value="1"/>
</dbReference>
<dbReference type="CDD" id="cd11364">
    <property type="entry name" value="RNase_PH_PNPase_2"/>
    <property type="match status" value="1"/>
</dbReference>
<dbReference type="CDD" id="cd04472">
    <property type="entry name" value="S1_PNPase"/>
    <property type="match status" value="1"/>
</dbReference>
<dbReference type="FunFam" id="2.40.50.140:FF:000107">
    <property type="entry name" value="Polyribonucleotide nucleotidyltransferase"/>
    <property type="match status" value="1"/>
</dbReference>
<dbReference type="FunFam" id="3.30.1370.10:FF:000001">
    <property type="entry name" value="Polyribonucleotide nucleotidyltransferase"/>
    <property type="match status" value="1"/>
</dbReference>
<dbReference type="FunFam" id="3.30.230.70:FF:000001">
    <property type="entry name" value="Polyribonucleotide nucleotidyltransferase"/>
    <property type="match status" value="1"/>
</dbReference>
<dbReference type="FunFam" id="3.30.230.70:FF:000002">
    <property type="entry name" value="Polyribonucleotide nucleotidyltransferase"/>
    <property type="match status" value="1"/>
</dbReference>
<dbReference type="Gene3D" id="3.30.230.70">
    <property type="entry name" value="GHMP Kinase, N-terminal domain"/>
    <property type="match status" value="2"/>
</dbReference>
<dbReference type="Gene3D" id="3.30.1370.10">
    <property type="entry name" value="K Homology domain, type 1"/>
    <property type="match status" value="1"/>
</dbReference>
<dbReference type="Gene3D" id="2.40.50.140">
    <property type="entry name" value="Nucleic acid-binding proteins"/>
    <property type="match status" value="1"/>
</dbReference>
<dbReference type="HAMAP" id="MF_01595">
    <property type="entry name" value="PNPase"/>
    <property type="match status" value="1"/>
</dbReference>
<dbReference type="InterPro" id="IPR001247">
    <property type="entry name" value="ExoRNase_PH_dom1"/>
</dbReference>
<dbReference type="InterPro" id="IPR015847">
    <property type="entry name" value="ExoRNase_PH_dom2"/>
</dbReference>
<dbReference type="InterPro" id="IPR036345">
    <property type="entry name" value="ExoRNase_PH_dom2_sf"/>
</dbReference>
<dbReference type="InterPro" id="IPR004087">
    <property type="entry name" value="KH_dom"/>
</dbReference>
<dbReference type="InterPro" id="IPR004088">
    <property type="entry name" value="KH_dom_type_1"/>
</dbReference>
<dbReference type="InterPro" id="IPR036612">
    <property type="entry name" value="KH_dom_type_1_sf"/>
</dbReference>
<dbReference type="InterPro" id="IPR012340">
    <property type="entry name" value="NA-bd_OB-fold"/>
</dbReference>
<dbReference type="InterPro" id="IPR012162">
    <property type="entry name" value="PNPase"/>
</dbReference>
<dbReference type="InterPro" id="IPR027408">
    <property type="entry name" value="PNPase/RNase_PH_dom_sf"/>
</dbReference>
<dbReference type="InterPro" id="IPR015848">
    <property type="entry name" value="PNPase_PH_RNA-bd_bac/org-type"/>
</dbReference>
<dbReference type="InterPro" id="IPR020568">
    <property type="entry name" value="Ribosomal_Su5_D2-typ_SF"/>
</dbReference>
<dbReference type="InterPro" id="IPR003029">
    <property type="entry name" value="S1_domain"/>
</dbReference>
<dbReference type="NCBIfam" id="TIGR03591">
    <property type="entry name" value="polynuc_phos"/>
    <property type="match status" value="1"/>
</dbReference>
<dbReference type="NCBIfam" id="NF008805">
    <property type="entry name" value="PRK11824.1"/>
    <property type="match status" value="1"/>
</dbReference>
<dbReference type="PANTHER" id="PTHR11252">
    <property type="entry name" value="POLYRIBONUCLEOTIDE NUCLEOTIDYLTRANSFERASE"/>
    <property type="match status" value="1"/>
</dbReference>
<dbReference type="PANTHER" id="PTHR11252:SF0">
    <property type="entry name" value="POLYRIBONUCLEOTIDE NUCLEOTIDYLTRANSFERASE 1, MITOCHONDRIAL"/>
    <property type="match status" value="1"/>
</dbReference>
<dbReference type="Pfam" id="PF00013">
    <property type="entry name" value="KH_1"/>
    <property type="match status" value="1"/>
</dbReference>
<dbReference type="Pfam" id="PF03726">
    <property type="entry name" value="PNPase"/>
    <property type="match status" value="1"/>
</dbReference>
<dbReference type="Pfam" id="PF01138">
    <property type="entry name" value="RNase_PH"/>
    <property type="match status" value="2"/>
</dbReference>
<dbReference type="Pfam" id="PF03725">
    <property type="entry name" value="RNase_PH_C"/>
    <property type="match status" value="2"/>
</dbReference>
<dbReference type="Pfam" id="PF00575">
    <property type="entry name" value="S1"/>
    <property type="match status" value="1"/>
</dbReference>
<dbReference type="PIRSF" id="PIRSF005499">
    <property type="entry name" value="PNPase"/>
    <property type="match status" value="1"/>
</dbReference>
<dbReference type="SMART" id="SM00322">
    <property type="entry name" value="KH"/>
    <property type="match status" value="1"/>
</dbReference>
<dbReference type="SMART" id="SM00316">
    <property type="entry name" value="S1"/>
    <property type="match status" value="1"/>
</dbReference>
<dbReference type="SUPFAM" id="SSF54791">
    <property type="entry name" value="Eukaryotic type KH-domain (KH-domain type I)"/>
    <property type="match status" value="1"/>
</dbReference>
<dbReference type="SUPFAM" id="SSF50249">
    <property type="entry name" value="Nucleic acid-binding proteins"/>
    <property type="match status" value="1"/>
</dbReference>
<dbReference type="SUPFAM" id="SSF55666">
    <property type="entry name" value="Ribonuclease PH domain 2-like"/>
    <property type="match status" value="2"/>
</dbReference>
<dbReference type="SUPFAM" id="SSF54211">
    <property type="entry name" value="Ribosomal protein S5 domain 2-like"/>
    <property type="match status" value="2"/>
</dbReference>
<dbReference type="PROSITE" id="PS50084">
    <property type="entry name" value="KH_TYPE_1"/>
    <property type="match status" value="1"/>
</dbReference>
<dbReference type="PROSITE" id="PS50126">
    <property type="entry name" value="S1"/>
    <property type="match status" value="1"/>
</dbReference>
<proteinExistence type="inferred from homology"/>
<gene>
    <name evidence="1" type="primary">pnp</name>
    <name type="ordered locus">mlr5562</name>
</gene>
<evidence type="ECO:0000255" key="1">
    <source>
        <dbReference type="HAMAP-Rule" id="MF_01595"/>
    </source>
</evidence>
<sequence>MFNQHKVEIEWGGRPLILETGKIARQADGAVLATYGETKVLATVVSMKEPKPGLDFFPLTVNYQEKTYAAGKIPGGYFKREGRPSEKETLVSRLIDRPIRPLFADGYKNDTQIVVTVVQHDLENDPDILSIVATSAALTLSGVPFMGPVGGARVGYINGEYVLNPHIDEMQESKLDLVVAGTADAVLMVESEAKELGEELMLGAVMFGHKGFQPVIDAIIKLAEVAAKEPRDFTAPDYSALEGEMLKIVGDELSNAYKITDKQQRYAAVDAVKAKVKAAFAPAEGEEPKYTSEQIGSVFKELQAKVVRWNILDTGSRIDGRDLKTVRKIVSEVGVLPRTHGSALFTRGETQALVVATLGTGEDEQYVDSLTGMYKEKFLLHYNFPPYSVGETGRMGSPGRREIGHGKLAWRAIRPMLPSADQFPYTLRVVSEITESNGSSSMATVCGTSLALMDAGVPLAKPVAGIAMGLIKEGERFAVLSDILGDEDHLGDMDFKVAGTANGITSLQMDIKIEGITEEIMKIALDQAKDGRQHILGEMAHALTGARPELGEFAPRIEVMHIPTDKIRDVIGSGGKVIREIVEKTGAKINIEDDGTVKIASSNAKEIEAAKKWIHTIVAEPEVGEIYEGTVVKTADFGAFVNFFGPRDGLVHISQLANERVAKTSDVVKEGDKVWVKLMGFDERGKVRLSMKVVDQATGKEIVRDKRAEGEEDAA</sequence>
<protein>
    <recommendedName>
        <fullName evidence="1">Polyribonucleotide nucleotidyltransferase</fullName>
        <ecNumber evidence="1">2.7.7.8</ecNumber>
    </recommendedName>
    <alternativeName>
        <fullName evidence="1">Polynucleotide phosphorylase</fullName>
        <shortName evidence="1">PNPase</shortName>
    </alternativeName>
</protein>
<organism>
    <name type="scientific">Mesorhizobium japonicum (strain LMG 29417 / CECT 9101 / MAFF 303099)</name>
    <name type="common">Mesorhizobium loti (strain MAFF 303099)</name>
    <dbReference type="NCBI Taxonomy" id="266835"/>
    <lineage>
        <taxon>Bacteria</taxon>
        <taxon>Pseudomonadati</taxon>
        <taxon>Pseudomonadota</taxon>
        <taxon>Alphaproteobacteria</taxon>
        <taxon>Hyphomicrobiales</taxon>
        <taxon>Phyllobacteriaceae</taxon>
        <taxon>Mesorhizobium</taxon>
    </lineage>
</organism>